<keyword id="KW-0238">DNA-binding</keyword>
<keyword id="KW-0539">Nucleus</keyword>
<keyword id="KW-1185">Reference proteome</keyword>
<keyword id="KW-0804">Transcription</keyword>
<keyword id="KW-0805">Transcription regulation</keyword>
<comment type="subunit">
    <text evidence="3">Interacts with SPL.</text>
</comment>
<comment type="subcellular location">
    <subcellularLocation>
        <location evidence="4">Nucleus</location>
    </subcellularLocation>
</comment>
<name>TCP11_ARATH</name>
<organism>
    <name type="scientific">Arabidopsis thaliana</name>
    <name type="common">Mouse-ear cress</name>
    <dbReference type="NCBI Taxonomy" id="3702"/>
    <lineage>
        <taxon>Eukaryota</taxon>
        <taxon>Viridiplantae</taxon>
        <taxon>Streptophyta</taxon>
        <taxon>Embryophyta</taxon>
        <taxon>Tracheophyta</taxon>
        <taxon>Spermatophyta</taxon>
        <taxon>Magnoliopsida</taxon>
        <taxon>eudicotyledons</taxon>
        <taxon>Gunneridae</taxon>
        <taxon>Pentapetalae</taxon>
        <taxon>rosids</taxon>
        <taxon>malvids</taxon>
        <taxon>Brassicales</taxon>
        <taxon>Brassicaceae</taxon>
        <taxon>Camelineae</taxon>
        <taxon>Arabidopsis</taxon>
    </lineage>
</organism>
<protein>
    <recommendedName>
        <fullName>Transcription factor TCP11</fullName>
    </recommendedName>
</protein>
<proteinExistence type="evidence at protein level"/>
<feature type="chain" id="PRO_0000330785" description="Transcription factor TCP11">
    <location>
        <begin position="1"/>
        <end position="188"/>
    </location>
</feature>
<feature type="domain" description="TCP" evidence="1">
    <location>
        <begin position="43"/>
        <end position="97"/>
    </location>
</feature>
<feature type="region of interest" description="Disordered" evidence="2">
    <location>
        <begin position="26"/>
        <end position="53"/>
    </location>
</feature>
<feature type="region of interest" description="Disordered" evidence="2">
    <location>
        <begin position="115"/>
        <end position="136"/>
    </location>
</feature>
<feature type="compositionally biased region" description="Basic residues" evidence="2">
    <location>
        <begin position="44"/>
        <end position="53"/>
    </location>
</feature>
<feature type="compositionally biased region" description="Low complexity" evidence="2">
    <location>
        <begin position="116"/>
        <end position="136"/>
    </location>
</feature>
<gene>
    <name type="primary">TCP11</name>
    <name type="ordered locus">At2g37000</name>
    <name type="ORF">T1J8.18</name>
</gene>
<dbReference type="EMBL" id="AC006922">
    <property type="protein sequence ID" value="AAD31585.1"/>
    <property type="molecule type" value="Genomic_DNA"/>
</dbReference>
<dbReference type="EMBL" id="CP002685">
    <property type="protein sequence ID" value="AEC09333.1"/>
    <property type="molecule type" value="Genomic_DNA"/>
</dbReference>
<dbReference type="EMBL" id="BT010700">
    <property type="protein sequence ID" value="AAR20757.1"/>
    <property type="molecule type" value="mRNA"/>
</dbReference>
<dbReference type="EMBL" id="BT011504">
    <property type="protein sequence ID" value="AAS00344.1"/>
    <property type="molecule type" value="mRNA"/>
</dbReference>
<dbReference type="PIR" id="C84787">
    <property type="entry name" value="C84787"/>
</dbReference>
<dbReference type="RefSeq" id="NP_181237.1">
    <property type="nucleotide sequence ID" value="NM_129256.3"/>
</dbReference>
<dbReference type="SMR" id="Q9SJK7"/>
<dbReference type="BioGRID" id="3618">
    <property type="interactions" value="21"/>
</dbReference>
<dbReference type="FunCoup" id="Q9SJK7">
    <property type="interactions" value="1"/>
</dbReference>
<dbReference type="STRING" id="3702.Q9SJK7"/>
<dbReference type="PaxDb" id="3702-AT2G37000.1"/>
<dbReference type="EnsemblPlants" id="AT2G37000.1">
    <property type="protein sequence ID" value="AT2G37000.1"/>
    <property type="gene ID" value="AT2G37000"/>
</dbReference>
<dbReference type="GeneID" id="818274"/>
<dbReference type="Gramene" id="AT2G37000.1">
    <property type="protein sequence ID" value="AT2G37000.1"/>
    <property type="gene ID" value="AT2G37000"/>
</dbReference>
<dbReference type="KEGG" id="ath:AT2G37000"/>
<dbReference type="Araport" id="AT2G37000"/>
<dbReference type="TAIR" id="AT2G37000"/>
<dbReference type="eggNOG" id="ENOG502RZSX">
    <property type="taxonomic scope" value="Eukaryota"/>
</dbReference>
<dbReference type="HOGENOM" id="CLU_112232_0_0_1"/>
<dbReference type="InParanoid" id="Q9SJK7"/>
<dbReference type="OMA" id="YSHMPFT"/>
<dbReference type="OrthoDB" id="1911901at2759"/>
<dbReference type="PhylomeDB" id="Q9SJK7"/>
<dbReference type="PRO" id="PR:Q9SJK7"/>
<dbReference type="Proteomes" id="UP000006548">
    <property type="component" value="Chromosome 2"/>
</dbReference>
<dbReference type="ExpressionAtlas" id="Q9SJK7">
    <property type="expression patterns" value="baseline and differential"/>
</dbReference>
<dbReference type="GO" id="GO:0005634">
    <property type="term" value="C:nucleus"/>
    <property type="evidence" value="ECO:0007669"/>
    <property type="project" value="UniProtKB-SubCell"/>
</dbReference>
<dbReference type="GO" id="GO:0003677">
    <property type="term" value="F:DNA binding"/>
    <property type="evidence" value="ECO:0007669"/>
    <property type="project" value="UniProtKB-KW"/>
</dbReference>
<dbReference type="GO" id="GO:0003700">
    <property type="term" value="F:DNA-binding transcription factor activity"/>
    <property type="evidence" value="ECO:0000250"/>
    <property type="project" value="TAIR"/>
</dbReference>
<dbReference type="GO" id="GO:0007623">
    <property type="term" value="P:circadian rhythm"/>
    <property type="evidence" value="ECO:0000315"/>
    <property type="project" value="TAIR"/>
</dbReference>
<dbReference type="GO" id="GO:0006355">
    <property type="term" value="P:regulation of DNA-templated transcription"/>
    <property type="evidence" value="ECO:0000304"/>
    <property type="project" value="TAIR"/>
</dbReference>
<dbReference type="InterPro" id="IPR017887">
    <property type="entry name" value="TF_TCP_subgr"/>
</dbReference>
<dbReference type="InterPro" id="IPR005333">
    <property type="entry name" value="Transcription_factor_TCP"/>
</dbReference>
<dbReference type="PANTHER" id="PTHR31072:SF218">
    <property type="entry name" value="TRANSCRIPTION FACTOR TCP11-RELATED"/>
    <property type="match status" value="1"/>
</dbReference>
<dbReference type="PANTHER" id="PTHR31072">
    <property type="entry name" value="TRANSCRIPTION FACTOR TCP4-RELATED"/>
    <property type="match status" value="1"/>
</dbReference>
<dbReference type="Pfam" id="PF03634">
    <property type="entry name" value="TCP"/>
    <property type="match status" value="1"/>
</dbReference>
<dbReference type="PROSITE" id="PS51369">
    <property type="entry name" value="TCP"/>
    <property type="match status" value="1"/>
</dbReference>
<reference key="1">
    <citation type="journal article" date="1999" name="Nature">
        <title>Sequence and analysis of chromosome 2 of the plant Arabidopsis thaliana.</title>
        <authorList>
            <person name="Lin X."/>
            <person name="Kaul S."/>
            <person name="Rounsley S.D."/>
            <person name="Shea T.P."/>
            <person name="Benito M.-I."/>
            <person name="Town C.D."/>
            <person name="Fujii C.Y."/>
            <person name="Mason T.M."/>
            <person name="Bowman C.L."/>
            <person name="Barnstead M.E."/>
            <person name="Feldblyum T.V."/>
            <person name="Buell C.R."/>
            <person name="Ketchum K.A."/>
            <person name="Lee J.J."/>
            <person name="Ronning C.M."/>
            <person name="Koo H.L."/>
            <person name="Moffat K.S."/>
            <person name="Cronin L.A."/>
            <person name="Shen M."/>
            <person name="Pai G."/>
            <person name="Van Aken S."/>
            <person name="Umayam L."/>
            <person name="Tallon L.J."/>
            <person name="Gill J.E."/>
            <person name="Adams M.D."/>
            <person name="Carrera A.J."/>
            <person name="Creasy T.H."/>
            <person name="Goodman H.M."/>
            <person name="Somerville C.R."/>
            <person name="Copenhaver G.P."/>
            <person name="Preuss D."/>
            <person name="Nierman W.C."/>
            <person name="White O."/>
            <person name="Eisen J.A."/>
            <person name="Salzberg S.L."/>
            <person name="Fraser C.M."/>
            <person name="Venter J.C."/>
        </authorList>
    </citation>
    <scope>NUCLEOTIDE SEQUENCE [LARGE SCALE GENOMIC DNA]</scope>
    <source>
        <strain>cv. Columbia</strain>
    </source>
</reference>
<reference key="2">
    <citation type="journal article" date="2017" name="Plant J.">
        <title>Araport11: a complete reannotation of the Arabidopsis thaliana reference genome.</title>
        <authorList>
            <person name="Cheng C.Y."/>
            <person name="Krishnakumar V."/>
            <person name="Chan A.P."/>
            <person name="Thibaud-Nissen F."/>
            <person name="Schobel S."/>
            <person name="Town C.D."/>
        </authorList>
    </citation>
    <scope>GENOME REANNOTATION</scope>
    <source>
        <strain>cv. Columbia</strain>
    </source>
</reference>
<reference key="3">
    <citation type="submission" date="2004-01" db="EMBL/GenBank/DDBJ databases">
        <title>Arabidopsis ORF clones.</title>
        <authorList>
            <person name="Shinn P."/>
            <person name="Chen H."/>
            <person name="Cheuk R.F."/>
            <person name="Kim C.J."/>
            <person name="Ecker J.R."/>
        </authorList>
    </citation>
    <scope>NUCLEOTIDE SEQUENCE [LARGE SCALE MRNA]</scope>
    <source>
        <strain>cv. Columbia</strain>
    </source>
</reference>
<reference key="4">
    <citation type="journal article" date="2007" name="Plant Cell">
        <title>Arabidopsis BRANCHED1 acts as an integrator of branching signals within axillary buds.</title>
        <authorList>
            <person name="Aguilar-Martinez J.A."/>
            <person name="Poza-Carrion C."/>
            <person name="Cubas P."/>
        </authorList>
    </citation>
    <scope>GENE FAMILY</scope>
    <scope>NOMENCLATURE</scope>
</reference>
<reference key="5">
    <citation type="journal article" date="2014" name="J. Genet. Genomics">
        <title>SPOROCYTELESS is a novel embryophyte-specific transcription repressor that interacts with TPL and TCP proteins in Arabidopsis.</title>
        <authorList>
            <person name="Chen G.H."/>
            <person name="Sun J.Y."/>
            <person name="Liu M."/>
            <person name="Liu J."/>
            <person name="Yang W.C."/>
        </authorList>
    </citation>
    <scope>INTERACTION WITH SPL</scope>
</reference>
<accession>Q9SJK7</accession>
<evidence type="ECO:0000255" key="1">
    <source>
        <dbReference type="PROSITE-ProRule" id="PRU00701"/>
    </source>
</evidence>
<evidence type="ECO:0000256" key="2">
    <source>
        <dbReference type="SAM" id="MobiDB-lite"/>
    </source>
</evidence>
<evidence type="ECO:0000269" key="3">
    <source>
    </source>
</evidence>
<evidence type="ECO:0000305" key="4"/>
<sequence length="188" mass="20682">MIFQNVCRNESNFNAIASESRSQTQFGVSKSSSSGGGCISARTKDRHTKVNGRSRRVTMPALAAARIFQLTRELGHKTEGETIEWLLSQAEPSIIAATGYGTKLISNWVDVAADDSSSSSSMTSPQTQTQTPQSPSCRLDLCQPIGIQYPVNGYSHMPFTAMLLEPMTTTAESEVEIAEEEERRRRHH</sequence>